<feature type="chain" id="PRO_0000111651" description="Ribonuclease HII">
    <location>
        <begin position="1"/>
        <end position="207"/>
    </location>
</feature>
<feature type="domain" description="RNase H type-2" evidence="2">
    <location>
        <begin position="19"/>
        <end position="207"/>
    </location>
</feature>
<feature type="binding site" evidence="1">
    <location>
        <position position="25"/>
    </location>
    <ligand>
        <name>a divalent metal cation</name>
        <dbReference type="ChEBI" id="CHEBI:60240"/>
    </ligand>
</feature>
<feature type="binding site" evidence="1">
    <location>
        <position position="26"/>
    </location>
    <ligand>
        <name>a divalent metal cation</name>
        <dbReference type="ChEBI" id="CHEBI:60240"/>
    </ligand>
</feature>
<feature type="binding site" evidence="1">
    <location>
        <position position="117"/>
    </location>
    <ligand>
        <name>a divalent metal cation</name>
        <dbReference type="ChEBI" id="CHEBI:60240"/>
    </ligand>
</feature>
<dbReference type="EC" id="3.1.26.4" evidence="1"/>
<dbReference type="EMBL" id="BA000037">
    <property type="protein sequence ID" value="BAC95307.1"/>
    <property type="molecule type" value="Genomic_DNA"/>
</dbReference>
<dbReference type="RefSeq" id="WP_011079776.1">
    <property type="nucleotide sequence ID" value="NC_005139.1"/>
</dbReference>
<dbReference type="SMR" id="Q7MIH3"/>
<dbReference type="STRING" id="672.VV93_v1c22620"/>
<dbReference type="KEGG" id="vvy:VV2543"/>
<dbReference type="eggNOG" id="COG0164">
    <property type="taxonomic scope" value="Bacteria"/>
</dbReference>
<dbReference type="HOGENOM" id="CLU_036532_3_2_6"/>
<dbReference type="Proteomes" id="UP000002675">
    <property type="component" value="Chromosome I"/>
</dbReference>
<dbReference type="GO" id="GO:0005737">
    <property type="term" value="C:cytoplasm"/>
    <property type="evidence" value="ECO:0007669"/>
    <property type="project" value="UniProtKB-SubCell"/>
</dbReference>
<dbReference type="GO" id="GO:0032299">
    <property type="term" value="C:ribonuclease H2 complex"/>
    <property type="evidence" value="ECO:0007669"/>
    <property type="project" value="TreeGrafter"/>
</dbReference>
<dbReference type="GO" id="GO:0030145">
    <property type="term" value="F:manganese ion binding"/>
    <property type="evidence" value="ECO:0007669"/>
    <property type="project" value="UniProtKB-UniRule"/>
</dbReference>
<dbReference type="GO" id="GO:0003723">
    <property type="term" value="F:RNA binding"/>
    <property type="evidence" value="ECO:0007669"/>
    <property type="project" value="InterPro"/>
</dbReference>
<dbReference type="GO" id="GO:0004523">
    <property type="term" value="F:RNA-DNA hybrid ribonuclease activity"/>
    <property type="evidence" value="ECO:0007669"/>
    <property type="project" value="UniProtKB-UniRule"/>
</dbReference>
<dbReference type="GO" id="GO:0043137">
    <property type="term" value="P:DNA replication, removal of RNA primer"/>
    <property type="evidence" value="ECO:0007669"/>
    <property type="project" value="TreeGrafter"/>
</dbReference>
<dbReference type="GO" id="GO:0006298">
    <property type="term" value="P:mismatch repair"/>
    <property type="evidence" value="ECO:0007669"/>
    <property type="project" value="TreeGrafter"/>
</dbReference>
<dbReference type="CDD" id="cd07182">
    <property type="entry name" value="RNase_HII_bacteria_HII_like"/>
    <property type="match status" value="1"/>
</dbReference>
<dbReference type="FunFam" id="3.30.420.10:FF:000006">
    <property type="entry name" value="Ribonuclease HII"/>
    <property type="match status" value="1"/>
</dbReference>
<dbReference type="Gene3D" id="3.30.420.10">
    <property type="entry name" value="Ribonuclease H-like superfamily/Ribonuclease H"/>
    <property type="match status" value="1"/>
</dbReference>
<dbReference type="HAMAP" id="MF_00052_B">
    <property type="entry name" value="RNase_HII_B"/>
    <property type="match status" value="1"/>
</dbReference>
<dbReference type="InterPro" id="IPR022898">
    <property type="entry name" value="RNase_HII"/>
</dbReference>
<dbReference type="InterPro" id="IPR001352">
    <property type="entry name" value="RNase_HII/HIII"/>
</dbReference>
<dbReference type="InterPro" id="IPR024567">
    <property type="entry name" value="RNase_HII/HIII_dom"/>
</dbReference>
<dbReference type="InterPro" id="IPR012337">
    <property type="entry name" value="RNaseH-like_sf"/>
</dbReference>
<dbReference type="InterPro" id="IPR036397">
    <property type="entry name" value="RNaseH_sf"/>
</dbReference>
<dbReference type="NCBIfam" id="NF000594">
    <property type="entry name" value="PRK00015.1-1"/>
    <property type="match status" value="1"/>
</dbReference>
<dbReference type="NCBIfam" id="NF000595">
    <property type="entry name" value="PRK00015.1-3"/>
    <property type="match status" value="1"/>
</dbReference>
<dbReference type="NCBIfam" id="NF000596">
    <property type="entry name" value="PRK00015.1-4"/>
    <property type="match status" value="1"/>
</dbReference>
<dbReference type="PANTHER" id="PTHR10954">
    <property type="entry name" value="RIBONUCLEASE H2 SUBUNIT A"/>
    <property type="match status" value="1"/>
</dbReference>
<dbReference type="PANTHER" id="PTHR10954:SF18">
    <property type="entry name" value="RIBONUCLEASE HII"/>
    <property type="match status" value="1"/>
</dbReference>
<dbReference type="Pfam" id="PF01351">
    <property type="entry name" value="RNase_HII"/>
    <property type="match status" value="1"/>
</dbReference>
<dbReference type="SUPFAM" id="SSF53098">
    <property type="entry name" value="Ribonuclease H-like"/>
    <property type="match status" value="1"/>
</dbReference>
<dbReference type="PROSITE" id="PS51975">
    <property type="entry name" value="RNASE_H_2"/>
    <property type="match status" value="1"/>
</dbReference>
<name>RNH2_VIBVY</name>
<accession>Q7MIH3</accession>
<organism>
    <name type="scientific">Vibrio vulnificus (strain YJ016)</name>
    <dbReference type="NCBI Taxonomy" id="196600"/>
    <lineage>
        <taxon>Bacteria</taxon>
        <taxon>Pseudomonadati</taxon>
        <taxon>Pseudomonadota</taxon>
        <taxon>Gammaproteobacteria</taxon>
        <taxon>Vibrionales</taxon>
        <taxon>Vibrionaceae</taxon>
        <taxon>Vibrio</taxon>
    </lineage>
</organism>
<comment type="function">
    <text evidence="1">Endonuclease that specifically degrades the RNA of RNA-DNA hybrids.</text>
</comment>
<comment type="catalytic activity">
    <reaction evidence="1">
        <text>Endonucleolytic cleavage to 5'-phosphomonoester.</text>
        <dbReference type="EC" id="3.1.26.4"/>
    </reaction>
</comment>
<comment type="cofactor">
    <cofactor evidence="1">
        <name>Mn(2+)</name>
        <dbReference type="ChEBI" id="CHEBI:29035"/>
    </cofactor>
    <cofactor evidence="1">
        <name>Mg(2+)</name>
        <dbReference type="ChEBI" id="CHEBI:18420"/>
    </cofactor>
    <text evidence="1">Manganese or magnesium. Binds 1 divalent metal ion per monomer in the absence of substrate. May bind a second metal ion after substrate binding.</text>
</comment>
<comment type="subcellular location">
    <subcellularLocation>
        <location evidence="1">Cytoplasm</location>
    </subcellularLocation>
</comment>
<comment type="similarity">
    <text evidence="1">Belongs to the RNase HII family.</text>
</comment>
<keyword id="KW-0963">Cytoplasm</keyword>
<keyword id="KW-0255">Endonuclease</keyword>
<keyword id="KW-0378">Hydrolase</keyword>
<keyword id="KW-0464">Manganese</keyword>
<keyword id="KW-0479">Metal-binding</keyword>
<keyword id="KW-0540">Nuclease</keyword>
<gene>
    <name evidence="1" type="primary">rnhB</name>
    <name type="ordered locus">VV2543</name>
</gene>
<proteinExistence type="inferred from homology"/>
<reference key="1">
    <citation type="journal article" date="2003" name="Genome Res.">
        <title>Comparative genome analysis of Vibrio vulnificus, a marine pathogen.</title>
        <authorList>
            <person name="Chen C.-Y."/>
            <person name="Wu K.-M."/>
            <person name="Chang Y.-C."/>
            <person name="Chang C.-H."/>
            <person name="Tsai H.-C."/>
            <person name="Liao T.-L."/>
            <person name="Liu Y.-M."/>
            <person name="Chen H.-J."/>
            <person name="Shen A.B.-T."/>
            <person name="Li J.-C."/>
            <person name="Su T.-L."/>
            <person name="Shao C.-P."/>
            <person name="Lee C.-T."/>
            <person name="Hor L.-I."/>
            <person name="Tsai S.-F."/>
        </authorList>
    </citation>
    <scope>NUCLEOTIDE SEQUENCE [LARGE SCALE GENOMIC DNA]</scope>
    <source>
        <strain>YJ016</strain>
    </source>
</reference>
<sequence>MAAKETKELPPFEYPQGYHCIAGVDEVGRGPLVGDVVTAAVILDPNNPIEGLNDSKKLSEKKRLALLPEIQEKALAWAVGRCSPEEIDQLNILQATMVAMQRAVEGLAVKPDLVLIDGNRCPALPMDSQAVVKGDLRVAQISAASIIAKVVRDQEMEELDKQYPQFGFAQHKGYPTKAHFDAIEKHGVIEQHRKSFKPVKKALGIEE</sequence>
<evidence type="ECO:0000255" key="1">
    <source>
        <dbReference type="HAMAP-Rule" id="MF_00052"/>
    </source>
</evidence>
<evidence type="ECO:0000255" key="2">
    <source>
        <dbReference type="PROSITE-ProRule" id="PRU01319"/>
    </source>
</evidence>
<protein>
    <recommendedName>
        <fullName evidence="1">Ribonuclease HII</fullName>
        <shortName evidence="1">RNase HII</shortName>
        <ecNumber evidence="1">3.1.26.4</ecNumber>
    </recommendedName>
</protein>